<keyword id="KW-0002">3D-structure</keyword>
<keyword id="KW-0025">Alternative splicing</keyword>
<keyword id="KW-1003">Cell membrane</keyword>
<keyword id="KW-0903">Direct protein sequencing</keyword>
<keyword id="KW-0325">Glycoprotein</keyword>
<keyword id="KW-0472">Membrane</keyword>
<keyword id="KW-0597">Phosphoprotein</keyword>
<keyword id="KW-1267">Proteomics identification</keyword>
<keyword id="KW-1185">Reference proteome</keyword>
<keyword id="KW-0812">Transmembrane</keyword>
<keyword id="KW-1133">Transmembrane helix</keyword>
<keyword id="KW-0813">Transport</keyword>
<reference key="1">
    <citation type="journal article" date="1997" name="Nat. Med.">
        <title>Cloning of a human nucleoside transporter implicated in the cellular uptake of adenosine and chemotherapeutic drugs.</title>
        <authorList>
            <person name="Griffiths M."/>
            <person name="Beaumont N."/>
            <person name="Yao S.Y.M."/>
            <person name="Sundaram M."/>
            <person name="Boumah C.E."/>
            <person name="Davies A."/>
            <person name="Kwong F.Y.P."/>
            <person name="Coe I."/>
            <person name="Cass C.E."/>
            <person name="Young J.D."/>
            <person name="Baldwin S.A."/>
        </authorList>
    </citation>
    <scope>NUCLEOTIDE SEQUENCE [MRNA] (ISOFORM 1)</scope>
    <scope>PROTEIN SEQUENCE OF 2-22</scope>
    <scope>FUNCTION</scope>
    <scope>TRANSPORTER ACTIVITY</scope>
    <scope>ACTIVITY REGULATION</scope>
    <scope>BIOPHYSICOCHEMICAL PROPERTIES</scope>
    <source>
        <tissue>Placenta</tissue>
    </source>
</reference>
<reference key="2">
    <citation type="submission" date="1999-09" db="EMBL/GenBank/DDBJ databases">
        <title>Genomic sequence of the human equilibrative nucleoside transporter 1 (hENT1).</title>
        <authorList>
            <person name="Graham K.A."/>
            <person name="Coe I.R."/>
            <person name="Carpenter P."/>
            <person name="Baldwin S.A."/>
            <person name="Young J.D."/>
            <person name="Cass C.E."/>
        </authorList>
    </citation>
    <scope>NUCLEOTIDE SEQUENCE [GENOMIC DNA]</scope>
</reference>
<reference key="3">
    <citation type="journal article" date="2000" name="Cancer Chemother. Pharmacol.">
        <title>Human intestinal es nucleoside transporter: molecular characterization and nucleoside inhibitory profiles.</title>
        <authorList>
            <person name="Lum P.Y."/>
            <person name="Ngo L.Y."/>
            <person name="Bakken A.H."/>
            <person name="Unadkat J.D."/>
        </authorList>
    </citation>
    <scope>NUCLEOTIDE SEQUENCE [MRNA] (ISOFORM 1)</scope>
    <scope>FUNCTION</scope>
    <scope>TRANSPORTER ACTIVITY</scope>
    <scope>TISSUE SPECIFICITY</scope>
    <source>
        <tissue>Jejunum</tissue>
        <tissue>Small intestine</tissue>
    </source>
</reference>
<reference key="4">
    <citation type="journal article" date="2002" name="Nucleic Acids Res.">
        <title>Comparative genomic analysis of equilibrative nucleoside transporters suggests conserved protein structure despite limited sequence identity.</title>
        <authorList>
            <person name="Sankar N."/>
            <person name="Machado J."/>
            <person name="Abdulla P."/>
            <person name="Hilliker A.J."/>
            <person name="Coe I.R."/>
        </authorList>
    </citation>
    <scope>NUCLEOTIDE SEQUENCE [GENOMIC DNA]</scope>
</reference>
<reference key="5">
    <citation type="journal article" date="2003" name="Am. J. Physiol.">
        <title>Localization of human equilibrative nucleoside transporters, hENT1 and hENT2, in renal epithelial cells.</title>
        <authorList>
            <person name="Mangravite L.M."/>
            <person name="Xiao G."/>
            <person name="Giacomini K.M."/>
        </authorList>
    </citation>
    <scope>NUCLEOTIDE SEQUENCE [MRNA] (ISOFORM 1)</scope>
    <scope>FUNCTION</scope>
    <scope>TRANSPORTER ACTIVITY</scope>
    <scope>BIOPHYSICOCHEMICAL PROPERTIES</scope>
    <scope>TISSUE SPECIFICITY</scope>
    <scope>SUBCELLULAR LOCATION</scope>
    <scope>MUTAGENESIS OF ARG-453 AND 453-ARG--VAL-456</scope>
</reference>
<reference key="6">
    <citation type="journal article" date="2004" name="Nat. Genet.">
        <title>Complete sequencing and characterization of 21,243 full-length human cDNAs.</title>
        <authorList>
            <person name="Ota T."/>
            <person name="Suzuki Y."/>
            <person name="Nishikawa T."/>
            <person name="Otsuki T."/>
            <person name="Sugiyama T."/>
            <person name="Irie R."/>
            <person name="Wakamatsu A."/>
            <person name="Hayashi K."/>
            <person name="Sato H."/>
            <person name="Nagai K."/>
            <person name="Kimura K."/>
            <person name="Makita H."/>
            <person name="Sekine M."/>
            <person name="Obayashi M."/>
            <person name="Nishi T."/>
            <person name="Shibahara T."/>
            <person name="Tanaka T."/>
            <person name="Ishii S."/>
            <person name="Yamamoto J."/>
            <person name="Saito K."/>
            <person name="Kawai Y."/>
            <person name="Isono Y."/>
            <person name="Nakamura Y."/>
            <person name="Nagahari K."/>
            <person name="Murakami K."/>
            <person name="Yasuda T."/>
            <person name="Iwayanagi T."/>
            <person name="Wagatsuma M."/>
            <person name="Shiratori A."/>
            <person name="Sudo H."/>
            <person name="Hosoiri T."/>
            <person name="Kaku Y."/>
            <person name="Kodaira H."/>
            <person name="Kondo H."/>
            <person name="Sugawara M."/>
            <person name="Takahashi M."/>
            <person name="Kanda K."/>
            <person name="Yokoi T."/>
            <person name="Furuya T."/>
            <person name="Kikkawa E."/>
            <person name="Omura Y."/>
            <person name="Abe K."/>
            <person name="Kamihara K."/>
            <person name="Katsuta N."/>
            <person name="Sato K."/>
            <person name="Tanikawa M."/>
            <person name="Yamazaki M."/>
            <person name="Ninomiya K."/>
            <person name="Ishibashi T."/>
            <person name="Yamashita H."/>
            <person name="Murakawa K."/>
            <person name="Fujimori K."/>
            <person name="Tanai H."/>
            <person name="Kimata M."/>
            <person name="Watanabe M."/>
            <person name="Hiraoka S."/>
            <person name="Chiba Y."/>
            <person name="Ishida S."/>
            <person name="Ono Y."/>
            <person name="Takiguchi S."/>
            <person name="Watanabe S."/>
            <person name="Yosida M."/>
            <person name="Hotuta T."/>
            <person name="Kusano J."/>
            <person name="Kanehori K."/>
            <person name="Takahashi-Fujii A."/>
            <person name="Hara H."/>
            <person name="Tanase T.-O."/>
            <person name="Nomura Y."/>
            <person name="Togiya S."/>
            <person name="Komai F."/>
            <person name="Hara R."/>
            <person name="Takeuchi K."/>
            <person name="Arita M."/>
            <person name="Imose N."/>
            <person name="Musashino K."/>
            <person name="Yuuki H."/>
            <person name="Oshima A."/>
            <person name="Sasaki N."/>
            <person name="Aotsuka S."/>
            <person name="Yoshikawa Y."/>
            <person name="Matsunawa H."/>
            <person name="Ichihara T."/>
            <person name="Shiohata N."/>
            <person name="Sano S."/>
            <person name="Moriya S."/>
            <person name="Momiyama H."/>
            <person name="Satoh N."/>
            <person name="Takami S."/>
            <person name="Terashima Y."/>
            <person name="Suzuki O."/>
            <person name="Nakagawa S."/>
            <person name="Senoh A."/>
            <person name="Mizoguchi H."/>
            <person name="Goto Y."/>
            <person name="Shimizu F."/>
            <person name="Wakebe H."/>
            <person name="Hishigaki H."/>
            <person name="Watanabe T."/>
            <person name="Sugiyama A."/>
            <person name="Takemoto M."/>
            <person name="Kawakami B."/>
            <person name="Yamazaki M."/>
            <person name="Watanabe K."/>
            <person name="Kumagai A."/>
            <person name="Itakura S."/>
            <person name="Fukuzumi Y."/>
            <person name="Fujimori Y."/>
            <person name="Komiyama M."/>
            <person name="Tashiro H."/>
            <person name="Tanigami A."/>
            <person name="Fujiwara T."/>
            <person name="Ono T."/>
            <person name="Yamada K."/>
            <person name="Fujii Y."/>
            <person name="Ozaki K."/>
            <person name="Hirao M."/>
            <person name="Ohmori Y."/>
            <person name="Kawabata A."/>
            <person name="Hikiji T."/>
            <person name="Kobatake N."/>
            <person name="Inagaki H."/>
            <person name="Ikema Y."/>
            <person name="Okamoto S."/>
            <person name="Okitani R."/>
            <person name="Kawakami T."/>
            <person name="Noguchi S."/>
            <person name="Itoh T."/>
            <person name="Shigeta K."/>
            <person name="Senba T."/>
            <person name="Matsumura K."/>
            <person name="Nakajima Y."/>
            <person name="Mizuno T."/>
            <person name="Morinaga M."/>
            <person name="Sasaki M."/>
            <person name="Togashi T."/>
            <person name="Oyama M."/>
            <person name="Hata H."/>
            <person name="Watanabe M."/>
            <person name="Komatsu T."/>
            <person name="Mizushima-Sugano J."/>
            <person name="Satoh T."/>
            <person name="Shirai Y."/>
            <person name="Takahashi Y."/>
            <person name="Nakagawa K."/>
            <person name="Okumura K."/>
            <person name="Nagase T."/>
            <person name="Nomura N."/>
            <person name="Kikuchi H."/>
            <person name="Masuho Y."/>
            <person name="Yamashita R."/>
            <person name="Nakai K."/>
            <person name="Yada T."/>
            <person name="Nakamura Y."/>
            <person name="Ohara O."/>
            <person name="Isogai T."/>
            <person name="Sugano S."/>
        </authorList>
    </citation>
    <scope>NUCLEOTIDE SEQUENCE [LARGE SCALE MRNA] (ISOFORMS 1 AND 2)</scope>
    <source>
        <tissue>Adrenal gland</tissue>
    </source>
</reference>
<reference key="7">
    <citation type="journal article" date="2003" name="Nature">
        <title>The DNA sequence and analysis of human chromosome 6.</title>
        <authorList>
            <person name="Mungall A.J."/>
            <person name="Palmer S.A."/>
            <person name="Sims S.K."/>
            <person name="Edwards C.A."/>
            <person name="Ashurst J.L."/>
            <person name="Wilming L."/>
            <person name="Jones M.C."/>
            <person name="Horton R."/>
            <person name="Hunt S.E."/>
            <person name="Scott C.E."/>
            <person name="Gilbert J.G.R."/>
            <person name="Clamp M.E."/>
            <person name="Bethel G."/>
            <person name="Milne S."/>
            <person name="Ainscough R."/>
            <person name="Almeida J.P."/>
            <person name="Ambrose K.D."/>
            <person name="Andrews T.D."/>
            <person name="Ashwell R.I.S."/>
            <person name="Babbage A.K."/>
            <person name="Bagguley C.L."/>
            <person name="Bailey J."/>
            <person name="Banerjee R."/>
            <person name="Barker D.J."/>
            <person name="Barlow K.F."/>
            <person name="Bates K."/>
            <person name="Beare D.M."/>
            <person name="Beasley H."/>
            <person name="Beasley O."/>
            <person name="Bird C.P."/>
            <person name="Blakey S.E."/>
            <person name="Bray-Allen S."/>
            <person name="Brook J."/>
            <person name="Brown A.J."/>
            <person name="Brown J.Y."/>
            <person name="Burford D.C."/>
            <person name="Burrill W."/>
            <person name="Burton J."/>
            <person name="Carder C."/>
            <person name="Carter N.P."/>
            <person name="Chapman J.C."/>
            <person name="Clark S.Y."/>
            <person name="Clark G."/>
            <person name="Clee C.M."/>
            <person name="Clegg S."/>
            <person name="Cobley V."/>
            <person name="Collier R.E."/>
            <person name="Collins J.E."/>
            <person name="Colman L.K."/>
            <person name="Corby N.R."/>
            <person name="Coville G.J."/>
            <person name="Culley K.M."/>
            <person name="Dhami P."/>
            <person name="Davies J."/>
            <person name="Dunn M."/>
            <person name="Earthrowl M.E."/>
            <person name="Ellington A.E."/>
            <person name="Evans K.A."/>
            <person name="Faulkner L."/>
            <person name="Francis M.D."/>
            <person name="Frankish A."/>
            <person name="Frankland J."/>
            <person name="French L."/>
            <person name="Garner P."/>
            <person name="Garnett J."/>
            <person name="Ghori M.J."/>
            <person name="Gilby L.M."/>
            <person name="Gillson C.J."/>
            <person name="Glithero R.J."/>
            <person name="Grafham D.V."/>
            <person name="Grant M."/>
            <person name="Gribble S."/>
            <person name="Griffiths C."/>
            <person name="Griffiths M.N.D."/>
            <person name="Hall R."/>
            <person name="Halls K.S."/>
            <person name="Hammond S."/>
            <person name="Harley J.L."/>
            <person name="Hart E.A."/>
            <person name="Heath P.D."/>
            <person name="Heathcott R."/>
            <person name="Holmes S.J."/>
            <person name="Howden P.J."/>
            <person name="Howe K.L."/>
            <person name="Howell G.R."/>
            <person name="Huckle E."/>
            <person name="Humphray S.J."/>
            <person name="Humphries M.D."/>
            <person name="Hunt A.R."/>
            <person name="Johnson C.M."/>
            <person name="Joy A.A."/>
            <person name="Kay M."/>
            <person name="Keenan S.J."/>
            <person name="Kimberley A.M."/>
            <person name="King A."/>
            <person name="Laird G.K."/>
            <person name="Langford C."/>
            <person name="Lawlor S."/>
            <person name="Leongamornlert D.A."/>
            <person name="Leversha M."/>
            <person name="Lloyd C.R."/>
            <person name="Lloyd D.M."/>
            <person name="Loveland J.E."/>
            <person name="Lovell J."/>
            <person name="Martin S."/>
            <person name="Mashreghi-Mohammadi M."/>
            <person name="Maslen G.L."/>
            <person name="Matthews L."/>
            <person name="McCann O.T."/>
            <person name="McLaren S.J."/>
            <person name="McLay K."/>
            <person name="McMurray A."/>
            <person name="Moore M.J.F."/>
            <person name="Mullikin J.C."/>
            <person name="Niblett D."/>
            <person name="Nickerson T."/>
            <person name="Novik K.L."/>
            <person name="Oliver K."/>
            <person name="Overton-Larty E.K."/>
            <person name="Parker A."/>
            <person name="Patel R."/>
            <person name="Pearce A.V."/>
            <person name="Peck A.I."/>
            <person name="Phillimore B.J.C.T."/>
            <person name="Phillips S."/>
            <person name="Plumb R.W."/>
            <person name="Porter K.M."/>
            <person name="Ramsey Y."/>
            <person name="Ranby S.A."/>
            <person name="Rice C.M."/>
            <person name="Ross M.T."/>
            <person name="Searle S.M."/>
            <person name="Sehra H.K."/>
            <person name="Sheridan E."/>
            <person name="Skuce C.D."/>
            <person name="Smith S."/>
            <person name="Smith M."/>
            <person name="Spraggon L."/>
            <person name="Squares S.L."/>
            <person name="Steward C.A."/>
            <person name="Sycamore N."/>
            <person name="Tamlyn-Hall G."/>
            <person name="Tester J."/>
            <person name="Theaker A.J."/>
            <person name="Thomas D.W."/>
            <person name="Thorpe A."/>
            <person name="Tracey A."/>
            <person name="Tromans A."/>
            <person name="Tubby B."/>
            <person name="Wall M."/>
            <person name="Wallis J.M."/>
            <person name="West A.P."/>
            <person name="White S.S."/>
            <person name="Whitehead S.L."/>
            <person name="Whittaker H."/>
            <person name="Wild A."/>
            <person name="Willey D.J."/>
            <person name="Wilmer T.E."/>
            <person name="Wood J.M."/>
            <person name="Wray P.W."/>
            <person name="Wyatt J.C."/>
            <person name="Young L."/>
            <person name="Younger R.M."/>
            <person name="Bentley D.R."/>
            <person name="Coulson A."/>
            <person name="Durbin R.M."/>
            <person name="Hubbard T."/>
            <person name="Sulston J.E."/>
            <person name="Dunham I."/>
            <person name="Rogers J."/>
            <person name="Beck S."/>
        </authorList>
    </citation>
    <scope>NUCLEOTIDE SEQUENCE [LARGE SCALE GENOMIC DNA]</scope>
</reference>
<reference key="8">
    <citation type="submission" date="2005-07" db="EMBL/GenBank/DDBJ databases">
        <authorList>
            <person name="Mural R.J."/>
            <person name="Istrail S."/>
            <person name="Sutton G."/>
            <person name="Florea L."/>
            <person name="Halpern A.L."/>
            <person name="Mobarry C.M."/>
            <person name="Lippert R."/>
            <person name="Walenz B."/>
            <person name="Shatkay H."/>
            <person name="Dew I."/>
            <person name="Miller J.R."/>
            <person name="Flanigan M.J."/>
            <person name="Edwards N.J."/>
            <person name="Bolanos R."/>
            <person name="Fasulo D."/>
            <person name="Halldorsson B.V."/>
            <person name="Hannenhalli S."/>
            <person name="Turner R."/>
            <person name="Yooseph S."/>
            <person name="Lu F."/>
            <person name="Nusskern D.R."/>
            <person name="Shue B.C."/>
            <person name="Zheng X.H."/>
            <person name="Zhong F."/>
            <person name="Delcher A.L."/>
            <person name="Huson D.H."/>
            <person name="Kravitz S.A."/>
            <person name="Mouchard L."/>
            <person name="Reinert K."/>
            <person name="Remington K.A."/>
            <person name="Clark A.G."/>
            <person name="Waterman M.S."/>
            <person name="Eichler E.E."/>
            <person name="Adams M.D."/>
            <person name="Hunkapiller M.W."/>
            <person name="Myers E.W."/>
            <person name="Venter J.C."/>
        </authorList>
    </citation>
    <scope>NUCLEOTIDE SEQUENCE [LARGE SCALE GENOMIC DNA]</scope>
</reference>
<reference key="9">
    <citation type="journal article" date="2004" name="Genome Res.">
        <title>The status, quality, and expansion of the NIH full-length cDNA project: the Mammalian Gene Collection (MGC).</title>
        <authorList>
            <consortium name="The MGC Project Team"/>
        </authorList>
    </citation>
    <scope>NUCLEOTIDE SEQUENCE [LARGE SCALE MRNA] (ISOFORM 1)</scope>
    <source>
        <tissue>Colon</tissue>
        <tissue>Muscle</tissue>
    </source>
</reference>
<reference key="10">
    <citation type="journal article" date="2000" name="J. Biol. Chem.">
        <title>Kinetic and pharmacological properties of cloned human equilibrative nucleoside transporters, ENT1 and ENT2, stably expressed in nucleoside transporter-deficient PK15 cells. Ent2 exhibits a low affinity for guanosine and cytidine but a high affinity for inosine.</title>
        <authorList>
            <person name="Ward J.L."/>
            <person name="Sherali A."/>
            <person name="Mo Z.P."/>
            <person name="Tse C.M."/>
        </authorList>
    </citation>
    <scope>FUNCTION</scope>
    <scope>TRANSPORTER ACTIVITY</scope>
    <scope>ACTIVITY REGULATION</scope>
    <scope>BIOPHYSICOCHEMICAL PROPERTIES</scope>
    <scope>GLYCOSYLATION</scope>
</reference>
<reference key="11">
    <citation type="journal article" date="2001" name="J. Biol. Chem.">
        <title>Topology of a human equilibrative, nitrobenzylthioinosine (NBMPR)-sensitive nucleoside transporter (hENT1) implicated in the cellular uptake of adenosine and anti-cancer drugs.</title>
        <authorList>
            <person name="Sundaram M."/>
            <person name="Yao S.Y."/>
            <person name="Ingram J.C."/>
            <person name="Berry Z.A."/>
            <person name="Abidi F."/>
            <person name="Cass C.E."/>
            <person name="Baldwin S.A."/>
            <person name="Young J.D."/>
        </authorList>
    </citation>
    <scope>SUBCELLULAR LOCATION</scope>
    <scope>TISSUE SPECIFICITY</scope>
    <scope>TOPOLOGY</scope>
    <scope>GLYCOSYLATION AT ASN-48</scope>
    <scope>MUTAGENESIS OF ASN-48; ASN-277 AND ASN-288</scope>
</reference>
<reference key="12">
    <citation type="journal article" date="2001" name="Neuropharmacology">
        <title>Distinct regional distribution of human equilibrative nucleoside transporter proteins 1 and 2 (hENT1 and hENT2) in the central nervous system.</title>
        <authorList>
            <person name="Jennings L.L."/>
            <person name="Hao C."/>
            <person name="Cabrita M.A."/>
            <person name="Vickers M.F."/>
            <person name="Baldwin S.A."/>
            <person name="Young J.D."/>
            <person name="Cass C.E."/>
        </authorList>
    </citation>
    <scope>TISSUE SPECIFICITY</scope>
</reference>
<reference key="13">
    <citation type="journal article" date="2004" name="Biochem. J.">
        <title>Mutation of leucine-92 selectively reduces the apparent affinity of inosine, guanosine, NBMPR [S6-(4-nitrobenzyl)-mercaptopurine riboside] and dilazep for the human equilibrative nucleoside transporter, hENT1.</title>
        <authorList>
            <person name="Endres C.J."/>
            <person name="Sengupta D.J."/>
            <person name="Unadkat J.D."/>
        </authorList>
    </citation>
    <scope>FUNCTION</scope>
    <scope>TRANSPORTER ACTIVITY</scope>
    <scope>ACTIVITY REGULATION</scope>
    <scope>BIOPHYSICOCHEMICAL PROPERTIES</scope>
    <scope>MUTAGENESIS OF LEU-92</scope>
</reference>
<reference key="14">
    <citation type="journal article" date="2004" name="Biochem. Pharmacol.">
        <title>Glycine 154 of the equilibrative nucleoside transporter, hENT1, is important for nucleoside transport and for conferring sensitivity to the inhibitors nitrobenzylthioinosine, dipyridamole, and dilazep.</title>
        <authorList>
            <person name="SenGupta D.J."/>
            <person name="Unadkat J.D."/>
        </authorList>
    </citation>
    <scope>FUNCTION</scope>
    <scope>TRANSPORTER ACTIVITY</scope>
    <scope>ACTIVITY REGULATION</scope>
    <scope>BIOPHYSICOCHEMICAL PROPERTIES</scope>
    <scope>MUTAGENESIS OF GLY-154</scope>
</reference>
<reference key="15">
    <citation type="journal article" date="2004" name="Clin. Cancer Res.">
        <title>The absence of human equilibrative nucleoside transporter 1 is associated with reduced survival in patients with gemcitabine-treated pancreas adenocarcinoma.</title>
        <authorList>
            <person name="Spratlin J."/>
            <person name="Sangha R."/>
            <person name="Glubrecht D."/>
            <person name="Dabbagh L."/>
            <person name="Young J.D."/>
            <person name="Dumontet C."/>
            <person name="Cass C."/>
            <person name="Lai R."/>
            <person name="Mackey J.R."/>
        </authorList>
    </citation>
    <scope>SUBCELLULAR LOCATION</scope>
    <scope>TISSUE SPECIFICITY</scope>
</reference>
<reference key="16">
    <citation type="journal article" date="2007" name="J. Biol. Chem.">
        <title>Residues 334 and 338 in transmembrane segment 8 of human equilibrative nucleoside transporter 1 are important determinants of inhibitor sensitivity, protein folding, and catalytic turnover.</title>
        <authorList>
            <person name="Visser F."/>
            <person name="Sun L."/>
            <person name="Damaraju V."/>
            <person name="Tackaberry T."/>
            <person name="Peng Y."/>
            <person name="Robins M.J."/>
            <person name="Baldwin S.A."/>
            <person name="Young J.D."/>
            <person name="Cass C.E."/>
        </authorList>
    </citation>
    <scope>FUNCTION</scope>
    <scope>TRANSPORTER ACTIVITY</scope>
    <scope>ACTIVITY REGULATION</scope>
    <scope>BIOPHYSICOCHEMICAL PROPERTIES</scope>
    <scope>MUTAGENESIS OF PHE-334 AND ASN-338</scope>
</reference>
<reference key="17">
    <citation type="journal article" date="2008" name="Proc. Natl. Acad. Sci. U.S.A.">
        <title>A quantitative atlas of mitotic phosphorylation.</title>
        <authorList>
            <person name="Dephoure N."/>
            <person name="Zhou C."/>
            <person name="Villen J."/>
            <person name="Beausoleil S.A."/>
            <person name="Bakalarski C.E."/>
            <person name="Elledge S.J."/>
            <person name="Gygi S.P."/>
        </authorList>
    </citation>
    <scope>IDENTIFICATION BY MASS SPECTROMETRY [LARGE SCALE ANALYSIS]</scope>
    <source>
        <tissue>Cervix carcinoma</tissue>
    </source>
</reference>
<reference key="18">
    <citation type="journal article" date="2009" name="Nat. Biotechnol.">
        <title>Mass-spectrometric identification and relative quantification of N-linked cell surface glycoproteins.</title>
        <authorList>
            <person name="Wollscheid B."/>
            <person name="Bausch-Fluck D."/>
            <person name="Henderson C."/>
            <person name="O'Brien R."/>
            <person name="Bibel M."/>
            <person name="Schiess R."/>
            <person name="Aebersold R."/>
            <person name="Watts J.D."/>
        </authorList>
    </citation>
    <scope>GLYCOSYLATION [LARGE SCALE ANALYSIS] AT ASN-48</scope>
    <source>
        <tissue>Leukemic T-cell</tissue>
    </source>
</reference>
<reference key="19">
    <citation type="journal article" date="2011" name="J. Biol. Chem.">
        <title>Nucleobase transport by human equilibrative nucleoside transporter 1 (hENT1).</title>
        <authorList>
            <person name="Yao S.Y."/>
            <person name="Ng A.M."/>
            <person name="Cass C.E."/>
            <person name="Baldwin S.A."/>
            <person name="Young J.D."/>
        </authorList>
    </citation>
    <scope>FUNCTION</scope>
    <scope>TRANSPORTER ACTIVITY</scope>
    <scope>ACTIVITY REGULATION</scope>
    <scope>BIOPHYSICOCHEMICAL PROPERTIES</scope>
    <scope>MUTAGENESIS OF CYS-87; CYS-193; CYS-213; CYS-222; CYS-297; CYS-333; CYS-378; CYS-414; CYS-416 AND CYS-439</scope>
    <scope>DOMAIN</scope>
</reference>
<reference key="20">
    <citation type="journal article" date="2013" name="Biochim. Biophys. Acta">
        <title>Stomatin interacts with GLUT1/SLC2A1, band 3/SLC4A1, and aquaporin-1 in human erythrocyte membrane domains.</title>
        <authorList>
            <person name="Rungaldier S."/>
            <person name="Oberwagner W."/>
            <person name="Salzer U."/>
            <person name="Csaszar E."/>
            <person name="Prohaska R."/>
        </authorList>
    </citation>
    <scope>SUBCELLULAR LOCATION</scope>
    <scope>TISSUE SPECIFICITY</scope>
    <scope>IDENTIFICATION IN A COMPLEX WITH STOM</scope>
    <scope>SUBUNIT</scope>
</reference>
<reference key="21">
    <citation type="journal article" date="2013" name="J. Pharmacol. Exp. Ther.">
        <title>Basolateral uptake of nucleosides by Sertoli cells is mediated primarily by equilibrative nucleoside transporter 1.</title>
        <authorList>
            <person name="Klein D.M."/>
            <person name="Evans K.K."/>
            <person name="Hardwick R.N."/>
            <person name="Dantzler W.H."/>
            <person name="Wright S.H."/>
            <person name="Cherrington N.J."/>
        </authorList>
    </citation>
    <scope>TISSUE SPECIFICITY</scope>
    <scope>SUBCELLULAR LOCATION</scope>
</reference>
<reference key="22">
    <citation type="journal article" date="2013" name="J. Proteome Res.">
        <title>Toward a comprehensive characterization of a human cancer cell phosphoproteome.</title>
        <authorList>
            <person name="Zhou H."/>
            <person name="Di Palma S."/>
            <person name="Preisinger C."/>
            <person name="Peng M."/>
            <person name="Polat A.N."/>
            <person name="Heck A.J."/>
            <person name="Mohammed S."/>
        </authorList>
    </citation>
    <scope>PHOSPHORYLATION [LARGE SCALE ANALYSIS] AT SER-254; SER-269 AND SER-273</scope>
    <scope>IDENTIFICATION BY MASS SPECTROMETRY [LARGE SCALE ANALYSIS]</scope>
    <source>
        <tissue>Cervix carcinoma</tissue>
        <tissue>Erythroleukemia</tissue>
    </source>
</reference>
<reference key="23">
    <citation type="journal article" date="2015" name="PLoS ONE">
        <title>The Role of Flexible Loops in Folding, Trafficking and Activity of Equilibrative Nucleoside Transporters.</title>
        <authorList>
            <person name="Aseervatham J."/>
            <person name="Tran L."/>
            <person name="Machaca K."/>
            <person name="Boudker O."/>
        </authorList>
    </citation>
    <scope>FUNCTION</scope>
    <scope>TRANSPORTER ACTIVITY</scope>
    <scope>ACTIVITY REGULATION</scope>
    <scope>BIOPHYSICOCHEMICAL PROPERTIES</scope>
    <scope>SUBCELLULAR LOCATION</scope>
</reference>
<reference key="24">
    <citation type="journal article" date="2015" name="Proteomics">
        <title>N-terminome analysis of the human mitochondrial proteome.</title>
        <authorList>
            <person name="Vaca Jacome A.S."/>
            <person name="Rabilloud T."/>
            <person name="Schaeffer-Reiss C."/>
            <person name="Rompais M."/>
            <person name="Ayoub D."/>
            <person name="Lane L."/>
            <person name="Bairoch A."/>
            <person name="Van Dorsselaer A."/>
            <person name="Carapito C."/>
        </authorList>
    </citation>
    <scope>IDENTIFICATION BY MASS SPECTROMETRY [LARGE SCALE ANALYSIS]</scope>
</reference>
<reference key="25">
    <citation type="journal article" date="2017" name="Protein Cell">
        <title>Functional characterization of human equilibrative nucleoside transporter 1.</title>
        <authorList>
            <person name="Huang W."/>
            <person name="Zeng X."/>
            <person name="Shi Y."/>
            <person name="Liu M."/>
        </authorList>
    </citation>
    <scope>FUNCTION</scope>
    <scope>TRANSPORTER ACTIVITY</scope>
    <scope>ACTIVITY REGULATION</scope>
    <scope>BIOPHYSICOCHEMICAL PROPERTIES</scope>
    <scope>MUTAGENESIS OF MET-33; GLY-179; PHE-209; PRO-308; PHE-390 AND LEU-442</scope>
</reference>
<reference key="26">
    <citation type="journal article" date="2006" name="Science">
        <title>The consensus coding sequences of human breast and colorectal cancers.</title>
        <authorList>
            <person name="Sjoeblom T."/>
            <person name="Jones S."/>
            <person name="Wood L.D."/>
            <person name="Parsons D.W."/>
            <person name="Lin J."/>
            <person name="Barber T.D."/>
            <person name="Mandelker D."/>
            <person name="Leary R.J."/>
            <person name="Ptak J."/>
            <person name="Silliman N."/>
            <person name="Szabo S."/>
            <person name="Buckhaults P."/>
            <person name="Farrell C."/>
            <person name="Meeh P."/>
            <person name="Markowitz S.D."/>
            <person name="Willis J."/>
            <person name="Dawson D."/>
            <person name="Willson J.K.V."/>
            <person name="Gazdar A.F."/>
            <person name="Hartigan J."/>
            <person name="Wu L."/>
            <person name="Liu C."/>
            <person name="Parmigiani G."/>
            <person name="Park B.H."/>
            <person name="Bachman K.E."/>
            <person name="Papadopoulos N."/>
            <person name="Vogelstein B."/>
            <person name="Kinzler K.W."/>
            <person name="Velculescu V.E."/>
        </authorList>
    </citation>
    <scope>VARIANTS [LARGE SCALE ANALYSIS] THR-293 AND VAL-455</scope>
</reference>
<reference key="27">
    <citation type="journal article" date="2022" name="Nature">
        <title>Apoptotic brown adipocytes enhance energy expenditure via extracellular inosine.</title>
        <authorList>
            <person name="Niemann B."/>
            <person name="Haufs-Brusberg S."/>
            <person name="Puetz L."/>
            <person name="Feickert M."/>
            <person name="Jaeckstein M.Y."/>
            <person name="Hoffmann A."/>
            <person name="Zurkovic J."/>
            <person name="Heine M."/>
            <person name="Trautmann E.M."/>
            <person name="Mueller C.E."/>
            <person name="Toenjes A."/>
            <person name="Schlein C."/>
            <person name="Jafari A."/>
            <person name="Eltzschig H.K."/>
            <person name="Gnad T."/>
            <person name="Blueher M."/>
            <person name="Krahmer N."/>
            <person name="Kovacs P."/>
            <person name="Heeren J."/>
            <person name="Pfeifer A."/>
        </authorList>
    </citation>
    <scope>VARIANT THR-216</scope>
    <scope>CHARACTERIZATION OF VARIANT THR-216</scope>
    <scope>FUNCTION</scope>
    <scope>TRANSPORTER ACTIVITY</scope>
    <scope>TISSUE SPECIFICITY</scope>
</reference>
<dbReference type="EMBL" id="U81375">
    <property type="protein sequence ID" value="AAC51103.1"/>
    <property type="molecule type" value="mRNA"/>
</dbReference>
<dbReference type="EMBL" id="AF190884">
    <property type="protein sequence ID" value="AAF02777.1"/>
    <property type="molecule type" value="Genomic_DNA"/>
</dbReference>
<dbReference type="EMBL" id="AF079117">
    <property type="protein sequence ID" value="AAC62495.1"/>
    <property type="molecule type" value="mRNA"/>
</dbReference>
<dbReference type="EMBL" id="AF495730">
    <property type="protein sequence ID" value="AAM11785.1"/>
    <property type="molecule type" value="Genomic_DNA"/>
</dbReference>
<dbReference type="EMBL" id="AK090491">
    <property type="protein sequence ID" value="BAG52169.1"/>
    <property type="molecule type" value="mRNA"/>
</dbReference>
<dbReference type="EMBL" id="AK090615">
    <property type="protein sequence ID" value="BAG52197.1"/>
    <property type="molecule type" value="mRNA"/>
</dbReference>
<dbReference type="EMBL" id="AL139392">
    <property type="status" value="NOT_ANNOTATED_CDS"/>
    <property type="molecule type" value="Genomic_DNA"/>
</dbReference>
<dbReference type="EMBL" id="CH471081">
    <property type="protein sequence ID" value="EAX04255.1"/>
    <property type="molecule type" value="Genomic_DNA"/>
</dbReference>
<dbReference type="EMBL" id="BC001382">
    <property type="protein sequence ID" value="AAH01382.1"/>
    <property type="molecule type" value="mRNA"/>
</dbReference>
<dbReference type="EMBL" id="BC008954">
    <property type="protein sequence ID" value="AAH08954.1"/>
    <property type="molecule type" value="mRNA"/>
</dbReference>
<dbReference type="CCDS" id="CCDS4908.1">
    <molecule id="Q99808-1"/>
</dbReference>
<dbReference type="RefSeq" id="NP_001071643.1">
    <molecule id="Q99808-1"/>
    <property type="nucleotide sequence ID" value="NM_001078175.3"/>
</dbReference>
<dbReference type="RefSeq" id="NP_001071645.1">
    <molecule id="Q99808-1"/>
    <property type="nucleotide sequence ID" value="NM_001078177.2"/>
</dbReference>
<dbReference type="RefSeq" id="NP_001291391.1">
    <molecule id="Q99808-2"/>
    <property type="nucleotide sequence ID" value="NM_001304462.2"/>
</dbReference>
<dbReference type="RefSeq" id="NP_001291392.1">
    <property type="nucleotide sequence ID" value="NM_001304463.1"/>
</dbReference>
<dbReference type="RefSeq" id="NP_001291394.1">
    <property type="nucleotide sequence ID" value="NM_001304465.1"/>
</dbReference>
<dbReference type="RefSeq" id="NP_001291395.1">
    <property type="nucleotide sequence ID" value="NM_001304466.1"/>
</dbReference>
<dbReference type="RefSeq" id="NP_001359256.1">
    <molecule id="Q99808-1"/>
    <property type="nucleotide sequence ID" value="NM_001372327.1"/>
</dbReference>
<dbReference type="RefSeq" id="XP_005248933.2">
    <molecule id="Q99808-1"/>
    <property type="nucleotide sequence ID" value="XM_005248876.6"/>
</dbReference>
<dbReference type="RefSeq" id="XP_005248935.1">
    <molecule id="Q99808-1"/>
    <property type="nucleotide sequence ID" value="XM_005248878.5"/>
</dbReference>
<dbReference type="RefSeq" id="XP_005248936.1">
    <property type="nucleotide sequence ID" value="XM_005248879.3"/>
</dbReference>
<dbReference type="RefSeq" id="XP_005248937.1">
    <molecule id="Q99808-1"/>
    <property type="nucleotide sequence ID" value="XM_005248880.5"/>
</dbReference>
<dbReference type="RefSeq" id="XP_005248938.1">
    <molecule id="Q99808-1"/>
    <property type="nucleotide sequence ID" value="XM_005248881.5"/>
</dbReference>
<dbReference type="RefSeq" id="XP_005248939.1">
    <molecule id="Q99808-1"/>
    <property type="nucleotide sequence ID" value="XM_005248882.5"/>
</dbReference>
<dbReference type="RefSeq" id="XP_054210419.1">
    <molecule id="Q99808-1"/>
    <property type="nucleotide sequence ID" value="XM_054354444.1"/>
</dbReference>
<dbReference type="RefSeq" id="XP_054210420.1">
    <molecule id="Q99808-1"/>
    <property type="nucleotide sequence ID" value="XM_054354445.1"/>
</dbReference>
<dbReference type="RefSeq" id="XP_054210421.1">
    <molecule id="Q99808-1"/>
    <property type="nucleotide sequence ID" value="XM_054354446.1"/>
</dbReference>
<dbReference type="RefSeq" id="XP_054210422.1">
    <molecule id="Q99808-1"/>
    <property type="nucleotide sequence ID" value="XM_054354447.1"/>
</dbReference>
<dbReference type="RefSeq" id="XP_054210423.1">
    <molecule id="Q99808-1"/>
    <property type="nucleotide sequence ID" value="XM_054354448.1"/>
</dbReference>
<dbReference type="PDB" id="6OB6">
    <property type="method" value="X-ray"/>
    <property type="resolution" value="2.90 A"/>
    <property type="chains" value="A/B=1-456"/>
</dbReference>
<dbReference type="PDB" id="6OB7">
    <property type="method" value="X-ray"/>
    <property type="resolution" value="2.30 A"/>
    <property type="chains" value="A=1-456"/>
</dbReference>
<dbReference type="PDB" id="8TZI">
    <property type="method" value="X-ray"/>
    <property type="resolution" value="2.70 A"/>
    <property type="chains" value="A=2-456"/>
</dbReference>
<dbReference type="PDBsum" id="6OB6"/>
<dbReference type="PDBsum" id="6OB7"/>
<dbReference type="PDBsum" id="8TZI"/>
<dbReference type="SMR" id="Q99808"/>
<dbReference type="BioGRID" id="108344">
    <property type="interactions" value="122"/>
</dbReference>
<dbReference type="CORUM" id="Q99808"/>
<dbReference type="FunCoup" id="Q99808">
    <property type="interactions" value="958"/>
</dbReference>
<dbReference type="IntAct" id="Q99808">
    <property type="interactions" value="69"/>
</dbReference>
<dbReference type="MINT" id="Q99808"/>
<dbReference type="STRING" id="9606.ENSP00000498610"/>
<dbReference type="BindingDB" id="Q99808"/>
<dbReference type="ChEMBL" id="CHEMBL1997"/>
<dbReference type="DrugBank" id="DB00640">
    <property type="generic name" value="Adenosine"/>
</dbReference>
<dbReference type="DrugBank" id="DB09061">
    <property type="generic name" value="Cannabidiol"/>
</dbReference>
<dbReference type="DrugBank" id="DB00242">
    <property type="generic name" value="Cladribine"/>
</dbReference>
<dbReference type="DrugBank" id="DB00987">
    <property type="generic name" value="Cytarabine"/>
</dbReference>
<dbReference type="DrugBank" id="DB00900">
    <property type="generic name" value="Didanosine"/>
</dbReference>
<dbReference type="DrugBank" id="DB13715">
    <property type="generic name" value="Dilazep"/>
</dbReference>
<dbReference type="DrugBank" id="DB00898">
    <property type="generic name" value="Ethanol"/>
</dbReference>
<dbReference type="DrugBank" id="DB01073">
    <property type="generic name" value="Fludarabine"/>
</dbReference>
<dbReference type="DrugBank" id="DB00544">
    <property type="generic name" value="Fluorouracil"/>
</dbReference>
<dbReference type="DrugBank" id="DB12010">
    <property type="generic name" value="Fostamatinib"/>
</dbReference>
<dbReference type="DrugBank" id="DB00441">
    <property type="generic name" value="Gemcitabine"/>
</dbReference>
<dbReference type="DrugBank" id="DB13766">
    <property type="generic name" value="Lidoflazine"/>
</dbReference>
<dbReference type="DrugBank" id="DB14009">
    <property type="generic name" value="Medical Cannabis"/>
</dbReference>
<dbReference type="DrugBank" id="DB01033">
    <property type="generic name" value="Mercaptopurine"/>
</dbReference>
<dbReference type="DrugBank" id="DB14011">
    <property type="generic name" value="Nabiximols"/>
</dbReference>
<dbReference type="DrugBank" id="DB01280">
    <property type="generic name" value="Nelarabine"/>
</dbReference>
<dbReference type="DrugBank" id="DB00642">
    <property type="generic name" value="Pemetrexed"/>
</dbReference>
<dbReference type="DrugBank" id="DB00811">
    <property type="generic name" value="Ribavirin"/>
</dbReference>
<dbReference type="DrugBank" id="DB09327">
    <property type="generic name" value="Tegafur-uracil"/>
</dbReference>
<dbReference type="DrugBank" id="DB00432">
    <property type="generic name" value="Trifluridine"/>
</dbReference>
<dbReference type="DrugBank" id="DB00197">
    <property type="generic name" value="Troglitazone"/>
</dbReference>
<dbReference type="DrugBank" id="DB02745">
    <property type="generic name" value="Uridine"/>
</dbReference>
<dbReference type="DrugBank" id="DB00943">
    <property type="generic name" value="Zalcitabine"/>
</dbReference>
<dbReference type="DrugCentral" id="Q99808"/>
<dbReference type="GuidetoPHARMACOLOGY" id="1117"/>
<dbReference type="TCDB" id="2.A.57.1.1">
    <property type="family name" value="the equilibrative nucleoside transporter (ent) family"/>
</dbReference>
<dbReference type="GlyConnect" id="1219">
    <property type="glycosylation" value="2 N-Linked glycans (1 site), 1 O-GlcNAc glycan (1 site)"/>
</dbReference>
<dbReference type="GlyCosmos" id="Q99808">
    <property type="glycosylation" value="2 sites, 5 glycans"/>
</dbReference>
<dbReference type="GlyGen" id="Q99808">
    <property type="glycosylation" value="3 sites, 7 N-linked glycans (1 site), 4 O-linked glycans (2 sites)"/>
</dbReference>
<dbReference type="iPTMnet" id="Q99808"/>
<dbReference type="PhosphoSitePlus" id="Q99808"/>
<dbReference type="SwissPalm" id="Q99808"/>
<dbReference type="BioMuta" id="SLC29A1"/>
<dbReference type="DMDM" id="9296956"/>
<dbReference type="jPOST" id="Q99808"/>
<dbReference type="MassIVE" id="Q99808"/>
<dbReference type="PaxDb" id="9606-ENSP00000377424"/>
<dbReference type="PeptideAtlas" id="Q99808"/>
<dbReference type="ProteomicsDB" id="78487">
    <molecule id="Q99808-1"/>
</dbReference>
<dbReference type="Pumba" id="Q99808"/>
<dbReference type="Antibodypedia" id="2790">
    <property type="antibodies" value="577 antibodies from 40 providers"/>
</dbReference>
<dbReference type="DNASU" id="2030"/>
<dbReference type="Ensembl" id="ENST00000371708.1">
    <molecule id="Q99808-1"/>
    <property type="protein sequence ID" value="ENSP00000360773.1"/>
    <property type="gene ID" value="ENSG00000112759.19"/>
</dbReference>
<dbReference type="Ensembl" id="ENST00000371713.6">
    <molecule id="Q99808-1"/>
    <property type="protein sequence ID" value="ENSP00000360778.1"/>
    <property type="gene ID" value="ENSG00000112759.19"/>
</dbReference>
<dbReference type="Ensembl" id="ENST00000371724.6">
    <molecule id="Q99808-1"/>
    <property type="protein sequence ID" value="ENSP00000360789.1"/>
    <property type="gene ID" value="ENSG00000112759.19"/>
</dbReference>
<dbReference type="Ensembl" id="ENST00000371755.9">
    <molecule id="Q99808-1"/>
    <property type="protein sequence ID" value="ENSP00000360820.3"/>
    <property type="gene ID" value="ENSG00000112759.19"/>
</dbReference>
<dbReference type="Ensembl" id="ENST00000393844.7">
    <molecule id="Q99808-1"/>
    <property type="protein sequence ID" value="ENSP00000377427.1"/>
    <property type="gene ID" value="ENSG00000112759.19"/>
</dbReference>
<dbReference type="Ensembl" id="ENST00000651428.1">
    <molecule id="Q99808-1"/>
    <property type="protein sequence ID" value="ENSP00000498610.1"/>
    <property type="gene ID" value="ENSG00000112759.19"/>
</dbReference>
<dbReference type="Ensembl" id="ENST00000652453.1">
    <molecule id="Q99808-1"/>
    <property type="protein sequence ID" value="ENSP00000499107.1"/>
    <property type="gene ID" value="ENSG00000112759.19"/>
</dbReference>
<dbReference type="Ensembl" id="ENST00000652680.1">
    <molecule id="Q99808-1"/>
    <property type="protein sequence ID" value="ENSP00000498747.1"/>
    <property type="gene ID" value="ENSG00000112759.19"/>
</dbReference>
<dbReference type="GeneID" id="2030"/>
<dbReference type="KEGG" id="hsa:2030"/>
<dbReference type="MANE-Select" id="ENST00000371755.9">
    <property type="protein sequence ID" value="ENSP00000360820.3"/>
    <property type="RefSeq nucleotide sequence ID" value="NM_001372327.1"/>
    <property type="RefSeq protein sequence ID" value="NP_001359256.1"/>
</dbReference>
<dbReference type="UCSC" id="uc003owu.2">
    <molecule id="Q99808-1"/>
    <property type="organism name" value="human"/>
</dbReference>
<dbReference type="AGR" id="HGNC:11003"/>
<dbReference type="CTD" id="2030"/>
<dbReference type="DisGeNET" id="2030"/>
<dbReference type="GeneCards" id="SLC29A1"/>
<dbReference type="HGNC" id="HGNC:11003">
    <property type="gene designation" value="SLC29A1"/>
</dbReference>
<dbReference type="HPA" id="ENSG00000112759">
    <property type="expression patterns" value="Low tissue specificity"/>
</dbReference>
<dbReference type="MalaCards" id="SLC29A1"/>
<dbReference type="MIM" id="602193">
    <property type="type" value="gene"/>
</dbReference>
<dbReference type="neXtProt" id="NX_Q99808"/>
<dbReference type="OpenTargets" id="ENSG00000112759"/>
<dbReference type="PharmGKB" id="PA154"/>
<dbReference type="VEuPathDB" id="HostDB:ENSG00000112759"/>
<dbReference type="eggNOG" id="KOG1479">
    <property type="taxonomic scope" value="Eukaryota"/>
</dbReference>
<dbReference type="GeneTree" id="ENSGT00950000182898"/>
<dbReference type="HOGENOM" id="CLU_021611_6_0_1"/>
<dbReference type="InParanoid" id="Q99808"/>
<dbReference type="OMA" id="KIMFINS"/>
<dbReference type="OrthoDB" id="46396at2759"/>
<dbReference type="PAN-GO" id="Q99808">
    <property type="GO annotations" value="3 GO annotations based on evolutionary models"/>
</dbReference>
<dbReference type="PhylomeDB" id="Q99808"/>
<dbReference type="TreeFam" id="TF313950"/>
<dbReference type="PathwayCommons" id="Q99808"/>
<dbReference type="Reactome" id="R-HSA-83936">
    <property type="pathway name" value="Transport of nucleosides and free purine and pyrimidine bases across the plasma membrane"/>
</dbReference>
<dbReference type="Reactome" id="R-HSA-9748787">
    <property type="pathway name" value="Azathioprine ADME"/>
</dbReference>
<dbReference type="Reactome" id="R-HSA-9755088">
    <property type="pathway name" value="Ribavirin ADME"/>
</dbReference>
<dbReference type="SignaLink" id="Q99808"/>
<dbReference type="SIGNOR" id="Q99808"/>
<dbReference type="BioGRID-ORCS" id="2030">
    <property type="hits" value="19 hits in 1163 CRISPR screens"/>
</dbReference>
<dbReference type="ChiTaRS" id="SLC29A1">
    <property type="organism name" value="human"/>
</dbReference>
<dbReference type="GeneWiki" id="Equilibrative_nucleoside_transporter_1"/>
<dbReference type="GenomeRNAi" id="2030"/>
<dbReference type="Pharos" id="Q99808">
    <property type="development level" value="Tclin"/>
</dbReference>
<dbReference type="PRO" id="PR:Q99808"/>
<dbReference type="Proteomes" id="UP000005640">
    <property type="component" value="Chromosome 6"/>
</dbReference>
<dbReference type="RNAct" id="Q99808">
    <property type="molecule type" value="protein"/>
</dbReference>
<dbReference type="Bgee" id="ENSG00000112759">
    <property type="expression patterns" value="Expressed in mucosa of stomach and 165 other cell types or tissues"/>
</dbReference>
<dbReference type="ExpressionAtlas" id="Q99808">
    <property type="expression patterns" value="baseline and differential"/>
</dbReference>
<dbReference type="GO" id="GO:0016324">
    <property type="term" value="C:apical plasma membrane"/>
    <property type="evidence" value="ECO:0000314"/>
    <property type="project" value="UniProtKB"/>
</dbReference>
<dbReference type="GO" id="GO:0016323">
    <property type="term" value="C:basolateral plasma membrane"/>
    <property type="evidence" value="ECO:0000314"/>
    <property type="project" value="UniProtKB"/>
</dbReference>
<dbReference type="GO" id="GO:0016020">
    <property type="term" value="C:membrane"/>
    <property type="evidence" value="ECO:0007005"/>
    <property type="project" value="UniProtKB"/>
</dbReference>
<dbReference type="GO" id="GO:0005886">
    <property type="term" value="C:plasma membrane"/>
    <property type="evidence" value="ECO:0000314"/>
    <property type="project" value="ARUK-UCL"/>
</dbReference>
<dbReference type="GO" id="GO:0098794">
    <property type="term" value="C:postsynapse"/>
    <property type="evidence" value="ECO:0007669"/>
    <property type="project" value="Ensembl"/>
</dbReference>
<dbReference type="GO" id="GO:0098793">
    <property type="term" value="C:presynapse"/>
    <property type="evidence" value="ECO:0007669"/>
    <property type="project" value="Ensembl"/>
</dbReference>
<dbReference type="GO" id="GO:0015207">
    <property type="term" value="F:adenine transmembrane transporter activity"/>
    <property type="evidence" value="ECO:0000314"/>
    <property type="project" value="UniProtKB"/>
</dbReference>
<dbReference type="GO" id="GO:0015212">
    <property type="term" value="F:cytidine transmembrane transporter activity"/>
    <property type="evidence" value="ECO:0000314"/>
    <property type="project" value="UniProtKB"/>
</dbReference>
<dbReference type="GO" id="GO:0015208">
    <property type="term" value="F:guanine transmembrane transporter activity"/>
    <property type="evidence" value="ECO:0000314"/>
    <property type="project" value="UniProtKB"/>
</dbReference>
<dbReference type="GO" id="GO:0005326">
    <property type="term" value="F:neurotransmitter transmembrane transporter activity"/>
    <property type="evidence" value="ECO:0000314"/>
    <property type="project" value="ARUK-UCL"/>
</dbReference>
<dbReference type="GO" id="GO:0005337">
    <property type="term" value="F:nucleoside transmembrane transporter activity"/>
    <property type="evidence" value="ECO:0000314"/>
    <property type="project" value="UniProtKB"/>
</dbReference>
<dbReference type="GO" id="GO:0015211">
    <property type="term" value="F:purine nucleoside transmembrane transporter activity"/>
    <property type="evidence" value="ECO:0000314"/>
    <property type="project" value="ARUK-UCL"/>
</dbReference>
<dbReference type="GO" id="GO:0015389">
    <property type="term" value="F:pyrimidine- and adenosine-specific:sodium symporter activity"/>
    <property type="evidence" value="ECO:0000314"/>
    <property type="project" value="UniProtKB"/>
</dbReference>
<dbReference type="GO" id="GO:0015210">
    <property type="term" value="F:uracil transmembrane transporter activity"/>
    <property type="evidence" value="ECO:0000314"/>
    <property type="project" value="UniProtKB"/>
</dbReference>
<dbReference type="GO" id="GO:0015213">
    <property type="term" value="F:uridine transmembrane transporter activity"/>
    <property type="evidence" value="ECO:0000314"/>
    <property type="project" value="UniProtKB"/>
</dbReference>
<dbReference type="GO" id="GO:0015853">
    <property type="term" value="P:adenine transport"/>
    <property type="evidence" value="ECO:0000314"/>
    <property type="project" value="UniProtKB"/>
</dbReference>
<dbReference type="GO" id="GO:0032238">
    <property type="term" value="P:adenosine transport"/>
    <property type="evidence" value="ECO:0000314"/>
    <property type="project" value="UniProtKB"/>
</dbReference>
<dbReference type="GO" id="GO:0071333">
    <property type="term" value="P:cellular response to glucose stimulus"/>
    <property type="evidence" value="ECO:0007669"/>
    <property type="project" value="Ensembl"/>
</dbReference>
<dbReference type="GO" id="GO:0071456">
    <property type="term" value="P:cellular response to hypoxia"/>
    <property type="evidence" value="ECO:0007669"/>
    <property type="project" value="Ensembl"/>
</dbReference>
<dbReference type="GO" id="GO:0015861">
    <property type="term" value="P:cytidine transport"/>
    <property type="evidence" value="ECO:0000314"/>
    <property type="project" value="UniProtKB"/>
</dbReference>
<dbReference type="GO" id="GO:0060079">
    <property type="term" value="P:excitatory postsynaptic potential"/>
    <property type="evidence" value="ECO:0007669"/>
    <property type="project" value="Ensembl"/>
</dbReference>
<dbReference type="GO" id="GO:1903716">
    <property type="term" value="P:guanine transmembrane transport"/>
    <property type="evidence" value="ECO:0000314"/>
    <property type="project" value="UniProtKB"/>
</dbReference>
<dbReference type="GO" id="GO:0035344">
    <property type="term" value="P:hypoxanthine transport"/>
    <property type="evidence" value="ECO:0000314"/>
    <property type="project" value="UniProtKB"/>
</dbReference>
<dbReference type="GO" id="GO:0035340">
    <property type="term" value="P:inosine transport"/>
    <property type="evidence" value="ECO:0000314"/>
    <property type="project" value="UniProtKB"/>
</dbReference>
<dbReference type="GO" id="GO:0007595">
    <property type="term" value="P:lactation"/>
    <property type="evidence" value="ECO:0007669"/>
    <property type="project" value="Ensembl"/>
</dbReference>
<dbReference type="GO" id="GO:0006836">
    <property type="term" value="P:neurotransmitter transport"/>
    <property type="evidence" value="ECO:0000314"/>
    <property type="project" value="ARUK-UCL"/>
</dbReference>
<dbReference type="GO" id="GO:0001504">
    <property type="term" value="P:neurotransmitter uptake"/>
    <property type="evidence" value="ECO:0000250"/>
    <property type="project" value="ARUK-UCL"/>
</dbReference>
<dbReference type="GO" id="GO:0015851">
    <property type="term" value="P:nucleobase transport"/>
    <property type="evidence" value="ECO:0000314"/>
    <property type="project" value="UniProtKB"/>
</dbReference>
<dbReference type="GO" id="GO:0006139">
    <property type="term" value="P:nucleobase-containing compound metabolic process"/>
    <property type="evidence" value="ECO:0000304"/>
    <property type="project" value="ProtInc"/>
</dbReference>
<dbReference type="GO" id="GO:1901642">
    <property type="term" value="P:nucleoside transmembrane transport"/>
    <property type="evidence" value="ECO:0000314"/>
    <property type="project" value="UniProtKB"/>
</dbReference>
<dbReference type="GO" id="GO:0015858">
    <property type="term" value="P:nucleoside transport"/>
    <property type="evidence" value="ECO:0000314"/>
    <property type="project" value="UniProtKB"/>
</dbReference>
<dbReference type="GO" id="GO:1904823">
    <property type="term" value="P:purine nucleobase transmembrane transport"/>
    <property type="evidence" value="ECO:0000314"/>
    <property type="project" value="UniProtKB"/>
</dbReference>
<dbReference type="GO" id="GO:0015860">
    <property type="term" value="P:purine nucleoside transmembrane transport"/>
    <property type="evidence" value="ECO:0000314"/>
    <property type="project" value="ARUK-UCL"/>
</dbReference>
<dbReference type="GO" id="GO:1904082">
    <property type="term" value="P:pyrimidine nucleobase transmembrane transport"/>
    <property type="evidence" value="ECO:0000314"/>
    <property type="project" value="UniProtKB"/>
</dbReference>
<dbReference type="GO" id="GO:0072531">
    <property type="term" value="P:pyrimidine-containing compound transmembrane transport"/>
    <property type="evidence" value="ECO:0000315"/>
    <property type="project" value="ARUK-UCL"/>
</dbReference>
<dbReference type="GO" id="GO:0035364">
    <property type="term" value="P:thymine transport"/>
    <property type="evidence" value="ECO:0000314"/>
    <property type="project" value="UniProtKB"/>
</dbReference>
<dbReference type="GO" id="GO:0150104">
    <property type="term" value="P:transport across blood-brain barrier"/>
    <property type="evidence" value="ECO:0000303"/>
    <property type="project" value="ARUK-UCL"/>
</dbReference>
<dbReference type="GO" id="GO:1903791">
    <property type="term" value="P:uracil transmembrane transport"/>
    <property type="evidence" value="ECO:0000314"/>
    <property type="project" value="UniProtKB"/>
</dbReference>
<dbReference type="GO" id="GO:0015862">
    <property type="term" value="P:uridine transmembrane transport"/>
    <property type="evidence" value="ECO:0000314"/>
    <property type="project" value="UniProtKB"/>
</dbReference>
<dbReference type="GO" id="GO:0006805">
    <property type="term" value="P:xenobiotic metabolic process"/>
    <property type="evidence" value="ECO:0000304"/>
    <property type="project" value="Reactome"/>
</dbReference>
<dbReference type="GO" id="GO:0006855">
    <property type="term" value="P:xenobiotic transmembrane transport"/>
    <property type="evidence" value="ECO:0000304"/>
    <property type="project" value="Reactome"/>
</dbReference>
<dbReference type="FunFam" id="1.20.1250.20:FF:000785">
    <property type="entry name" value="Solute carrier family 29 member 2"/>
    <property type="match status" value="1"/>
</dbReference>
<dbReference type="Gene3D" id="1.20.1250.20">
    <property type="entry name" value="MFS general substrate transporter like domains"/>
    <property type="match status" value="1"/>
</dbReference>
<dbReference type="InterPro" id="IPR034764">
    <property type="entry name" value="ENT1/ENT2"/>
</dbReference>
<dbReference type="InterPro" id="IPR002259">
    <property type="entry name" value="Eqnu_transpt"/>
</dbReference>
<dbReference type="InterPro" id="IPR036259">
    <property type="entry name" value="MFS_trans_sf"/>
</dbReference>
<dbReference type="NCBIfam" id="TIGR00939">
    <property type="entry name" value="2a57"/>
    <property type="match status" value="1"/>
</dbReference>
<dbReference type="PANTHER" id="PTHR10332">
    <property type="entry name" value="EQUILIBRATIVE NUCLEOSIDE TRANSPORTER"/>
    <property type="match status" value="1"/>
</dbReference>
<dbReference type="PANTHER" id="PTHR10332:SF9">
    <property type="entry name" value="EQUILIBRATIVE NUCLEOSIDE TRANSPORTER 1"/>
    <property type="match status" value="1"/>
</dbReference>
<dbReference type="Pfam" id="PF01733">
    <property type="entry name" value="Nucleoside_tran"/>
    <property type="match status" value="1"/>
</dbReference>
<dbReference type="PIRSF" id="PIRSF016379">
    <property type="entry name" value="ENT"/>
    <property type="match status" value="1"/>
</dbReference>
<dbReference type="PRINTS" id="PR01130">
    <property type="entry name" value="DERENTRNSPRT"/>
</dbReference>
<dbReference type="SUPFAM" id="SSF103473">
    <property type="entry name" value="MFS general substrate transporter"/>
    <property type="match status" value="1"/>
</dbReference>
<accession>Q99808</accession>
<accession>B3KQV7</accession>
<accession>B3KQY5</accession>
<accession>Q5T9W9</accession>
<accession>Q9UJY2</accession>
<evidence type="ECO:0000250" key="1">
    <source>
        <dbReference type="UniProtKB" id="O54698"/>
    </source>
</evidence>
<evidence type="ECO:0000255" key="2"/>
<evidence type="ECO:0000256" key="3">
    <source>
        <dbReference type="SAM" id="MobiDB-lite"/>
    </source>
</evidence>
<evidence type="ECO:0000269" key="4">
    <source>
    </source>
</evidence>
<evidence type="ECO:0000269" key="5">
    <source>
    </source>
</evidence>
<evidence type="ECO:0000269" key="6">
    <source>
    </source>
</evidence>
<evidence type="ECO:0000269" key="7">
    <source>
    </source>
</evidence>
<evidence type="ECO:0000269" key="8">
    <source>
    </source>
</evidence>
<evidence type="ECO:0000269" key="9">
    <source>
    </source>
</evidence>
<evidence type="ECO:0000269" key="10">
    <source>
    </source>
</evidence>
<evidence type="ECO:0000269" key="11">
    <source>
    </source>
</evidence>
<evidence type="ECO:0000269" key="12">
    <source>
    </source>
</evidence>
<evidence type="ECO:0000269" key="13">
    <source>
    </source>
</evidence>
<evidence type="ECO:0000269" key="14">
    <source>
    </source>
</evidence>
<evidence type="ECO:0000269" key="15">
    <source>
    </source>
</evidence>
<evidence type="ECO:0000269" key="16">
    <source>
    </source>
</evidence>
<evidence type="ECO:0000269" key="17">
    <source>
    </source>
</evidence>
<evidence type="ECO:0000269" key="18">
    <source>
    </source>
</evidence>
<evidence type="ECO:0000269" key="19">
    <source>
    </source>
</evidence>
<evidence type="ECO:0000269" key="20">
    <source>
    </source>
</evidence>
<evidence type="ECO:0000269" key="21">
    <source>
    </source>
</evidence>
<evidence type="ECO:0000303" key="22">
    <source>
    </source>
</evidence>
<evidence type="ECO:0000303" key="23">
    <source>
    </source>
</evidence>
<evidence type="ECO:0000303" key="24">
    <source>
    </source>
</evidence>
<evidence type="ECO:0000305" key="25"/>
<evidence type="ECO:0000312" key="26">
    <source>
        <dbReference type="HGNC" id="HGNC:11003"/>
    </source>
</evidence>
<evidence type="ECO:0007744" key="27">
    <source>
    </source>
</evidence>
<evidence type="ECO:0007829" key="28">
    <source>
        <dbReference type="PDB" id="6OB6"/>
    </source>
</evidence>
<evidence type="ECO:0007829" key="29">
    <source>
        <dbReference type="PDB" id="6OB7"/>
    </source>
</evidence>
<proteinExistence type="evidence at protein level"/>
<name>S29A1_HUMAN</name>
<protein>
    <recommendedName>
        <fullName>Equilibrative nucleoside transporter 1</fullName>
        <shortName>hENT1</shortName>
    </recommendedName>
    <alternativeName>
        <fullName evidence="22">Equilibrative nitrobenzylmercaptopurine riboside-sensitive nucleoside transporter</fullName>
        <shortName evidence="22">Equilibrative NBMPR-sensitive nucleoside transporter</shortName>
        <shortName evidence="22">es nucleoside transporter</shortName>
    </alternativeName>
    <alternativeName>
        <fullName>Nucleoside transporter, es-type</fullName>
    </alternativeName>
    <alternativeName>
        <fullName evidence="24">Solute carrier family 29 member 1</fullName>
    </alternativeName>
</protein>
<comment type="function">
    <text evidence="1 4 5 8 9 10 13 15 17 18 19 20 21">Uniporter involved in the facilitative transport of nucleosides and nucleobases, and contributes to maintaining their cellular homeostasis (PubMed:10722669, PubMed:10755314, PubMed:12527552, PubMed:14759222, PubMed:15037197, PubMed:17379602, PubMed:21795683, PubMed:26406980, PubMed:27995448, PubMed:35790189, PubMed:8986748). Functions as a Na(+)-independent transporter (PubMed:8986748). Involved in the transport of nucleosides such as adenosine, guanosine, inosine, uridine, thymidine and cytidine (PubMed:10722669, PubMed:10755314, PubMed:12527552, PubMed:14759222, PubMed:15037197, PubMed:17379602, PubMed:26406980, PubMed:8986748). Also transports purine nucleobases (hypoxanthine, adenine, guanine) and pyrimidine nucleobases (thymine, uracil) (PubMed:21795683, PubMed:27995448). Mediates basolateral nucleoside uptake into Sertoli cells, thereby regulating the transport of nucleosides in testis across the blood-testis barrier (By similarity). Regulates inosine levels in brown adipocytes tissues (BAT) and extracellular inosine levels, which controls BAT-dependent energy expenditure (PubMed:35790189).</text>
</comment>
<comment type="catalytic activity">
    <reaction evidence="4 8 9 10 13 18 19 21">
        <text>adenosine(in) = adenosine(out)</text>
        <dbReference type="Rhea" id="RHEA:75343"/>
        <dbReference type="ChEBI" id="CHEBI:16335"/>
    </reaction>
</comment>
<comment type="catalytic activity">
    <reaction evidence="4">
        <text>guanosine(in) = guanosine(out)</text>
        <dbReference type="Rhea" id="RHEA:75371"/>
        <dbReference type="ChEBI" id="CHEBI:16750"/>
    </reaction>
</comment>
<comment type="catalytic activity">
    <reaction evidence="4 8 9 20">
        <text>inosine(in) = inosine(out)</text>
        <dbReference type="Rhea" id="RHEA:75375"/>
        <dbReference type="ChEBI" id="CHEBI:17596"/>
    </reaction>
</comment>
<comment type="catalytic activity">
    <reaction evidence="4 5 10 18 21">
        <text>uridine(out) = uridine(in)</text>
        <dbReference type="Rhea" id="RHEA:71519"/>
        <dbReference type="ChEBI" id="CHEBI:16704"/>
    </reaction>
</comment>
<comment type="catalytic activity">
    <reaction evidence="4 8">
        <text>thymidine(in) = thymidine(out)</text>
        <dbReference type="Rhea" id="RHEA:75363"/>
        <dbReference type="ChEBI" id="CHEBI:17748"/>
    </reaction>
</comment>
<comment type="catalytic activity">
    <reaction evidence="4 10">
        <text>cytidine(in) = cytidine(out)</text>
        <dbReference type="Rhea" id="RHEA:75367"/>
        <dbReference type="ChEBI" id="CHEBI:17562"/>
    </reaction>
</comment>
<comment type="catalytic activity">
    <reaction evidence="15">
        <text>adenine(out) = adenine(in)</text>
        <dbReference type="Rhea" id="RHEA:71523"/>
        <dbReference type="ChEBI" id="CHEBI:16708"/>
    </reaction>
</comment>
<comment type="catalytic activity">
    <reaction evidence="15">
        <text>guanine(out) = guanine(in)</text>
        <dbReference type="Rhea" id="RHEA:71531"/>
        <dbReference type="ChEBI" id="CHEBI:16235"/>
    </reaction>
</comment>
<comment type="catalytic activity">
    <reaction evidence="15">
        <text>thymine(out) = thymine(in)</text>
        <dbReference type="Rhea" id="RHEA:71527"/>
        <dbReference type="ChEBI" id="CHEBI:17821"/>
    </reaction>
</comment>
<comment type="catalytic activity">
    <reaction evidence="15">
        <text>uracil(in) = uracil(out)</text>
        <dbReference type="Rhea" id="RHEA:69404"/>
        <dbReference type="ChEBI" id="CHEBI:17568"/>
    </reaction>
</comment>
<comment type="catalytic activity">
    <reaction evidence="15">
        <text>hypoxanthine(out) = hypoxanthine(in)</text>
        <dbReference type="Rhea" id="RHEA:71515"/>
        <dbReference type="ChEBI" id="CHEBI:17368"/>
    </reaction>
</comment>
<comment type="activity regulation">
    <text evidence="4 9 10 13 15 18 19 21">Transporter activity is sensitive to low concentrations of the inhibitor nitrobenzylmercaptopurine riboside (NBMPR) (PubMed:10722669, PubMed:14759222, PubMed:15037197, PubMed:17379602, PubMed:21795683, PubMed:26406980, PubMed:27995448, PubMed:8986748). Inhibited by dilazep (PubMed:14759222, PubMed:15037197, PubMed:17379602). Inhibited by dipyridamole (PubMed:14759222, PubMed:15037197, PubMed:17379602). Inhibited by hypoxanthine (PubMed:15037197). Inhibited by azidothymidine (AZT) (PubMed:15037197). Inhibited by dideoxycytidine (ddC) (PubMed:15037197). Inhibited by dideoxyinosine (ddI) (PubMed:15037197). Inhibited by draflazine (PubMed:17379602). Inhibited by soluflazine (PubMed:17379602). Inhibited by cladribine (PubMed:27995448). Inhibited by capecitabine (PubMed:27995448). Inhibited by clofarabine (PubMed:27995448). Inhibited by ribavirin (PubMed:27995448). Modestly inhibited by acyclovir (PubMed:27995448). Modestly inhibited by 5-fluorouracil (PubMed:27995448).</text>
</comment>
<comment type="biophysicochemical properties">
    <kinetics>
        <KM evidence="4">40 uM for adenosine</KM>
        <KM evidence="8">62 uM for adenosine</KM>
        <KM evidence="19">215 uM for adenosine</KM>
        <KM evidence="18">440 uM for adenosine</KM>
        <KM evidence="10">11.3 uM for adenosine</KM>
        <KM evidence="13">19.2 uM for adenosine</KM>
        <KM evidence="9">44 uM for adenosine</KM>
        <KM evidence="4">140 uM for guanosine</KM>
        <KM evidence="4">170 uM for inosine</KM>
        <KM evidence="9">65 uM for inosine</KM>
        <KM evidence="21">240 uM for uridine</KM>
        <KM evidence="4">260 uM for uridine</KM>
        <KM evidence="15">400 uM for uridine</KM>
        <KM evidence="18">2160 uM for uridine</KM>
        <KM evidence="10">43 uM for uridine</KM>
        <KM evidence="4">300 uM for thymidine</KM>
        <KM evidence="4">580 uM for cytidine</KM>
        <KM evidence="10">207 uM for cytidine</KM>
        <KM evidence="15">3200 uM for adenine</KM>
        <KM evidence="15">6300 uM for thymine</KM>
        <KM evidence="15">6000 uM for hypoxanthine</KM>
        <Vmax evidence="4">351.0 pmol/min/mg enzyme for adenosine uptake</Vmax>
        <Vmax evidence="13">1280.0 pmol/min/mg enzyme for adenosine uptake</Vmax>
        <Vmax evidence="19">578.0 nmol/min/mg enzyme for adenosine uptake</Vmax>
        <Vmax evidence="4">639.0 pmol/min/mg enzyme for guanosine uptake</Vmax>
        <Vmax evidence="4">163.0 pmol/min/mg enzyme for inosine uptake</Vmax>
        <Vmax evidence="4">853.0 pmol/min/mg enzyme for uridine uptake</Vmax>
        <Vmax evidence="4">698.0 pmol/min/mg enzyme for thymidine uptake</Vmax>
        <Vmax evidence="4">1290.0 pmol/min/mg enzyme for cytidine uptake</Vmax>
    </kinetics>
</comment>
<comment type="subunit">
    <text evidence="16">Identified in a complex with STOM.</text>
</comment>
<comment type="subcellular location">
    <subcellularLocation>
        <location evidence="8 17">Basolateral cell membrane</location>
        <topology evidence="25">Multi-pass membrane protein</topology>
    </subcellularLocation>
    <subcellularLocation>
        <location evidence="8">Apical cell membrane</location>
        <topology evidence="25">Multi-pass membrane protein</topology>
    </subcellularLocation>
    <subcellularLocation>
        <location evidence="7 11 16 18">Cell membrane</location>
        <topology evidence="25">Multi-pass membrane protein</topology>
    </subcellularLocation>
    <text evidence="7 8 16 17">Localized to the basolateral membrane of Sertoli cells (PubMed:23639800). Localized to the cell membrane of erythrocytes (PubMed:11584005, PubMed:23219802).</text>
</comment>
<comment type="alternative products">
    <event type="alternative splicing"/>
    <isoform>
        <id>Q99808-1</id>
        <name>1</name>
        <sequence type="displayed"/>
    </isoform>
    <isoform>
        <id>Q99808-2</id>
        <name>2</name>
        <sequence type="described" ref="VSP_056579"/>
    </isoform>
</comment>
<comment type="tissue specificity">
    <text evidence="5 6 7 8 11 16 17 20 21">Expressed in testis at the blood-testis barrier (at protein level) (PubMed:23639800). Detected in erythrocytes (at protein level) (PubMed:11584005, PubMed:23219802). Expressed at relatively high levels in cerebral cortex, particularly the frontal and parietal lobes, and the thalamus and basal ganglia (at protein level) (PubMed:11311901). In the midbrain expressed at moderate levels, whereas in the other areas of the brainstem, namely medulla and pons, cerebellum and the hippocampus expressed at lower amounts when compared to the other brain regions (at protein level) (PubMed:11311901). Expressed in Langerhans cells and lymphocytes in the pancreas (at protein level) (PubMed:15501974). Expressed in kidney, in polarized renal epithelial cells (PubMed:12527552). Expressed in adipose tissues (PubMed:35790189). Expressed in placenta (PubMed:8986748). Expressed in small intestine (PubMed:10755314).</text>
</comment>
<comment type="domain">
    <text evidence="15">Cys-414 near TM10 is a major determinant of nucleobase transport activity.</text>
</comment>
<comment type="PTM">
    <text evidence="4 14">Glycosylated.</text>
</comment>
<comment type="miscellaneous">
    <text evidence="11">The absence of the protein in tumor cells is associated with reduced survival in patients with gemcitabine-treated pancreas adenocarcinoma.</text>
</comment>
<comment type="similarity">
    <text evidence="25">Belongs to the SLC29A/ENT transporter (TC 2.A.57) family.</text>
</comment>
<gene>
    <name evidence="26" type="primary">SLC29A1</name>
    <name type="synonym">ENT1</name>
</gene>
<feature type="initiator methionine" description="Removed" evidence="21">
    <location>
        <position position="1"/>
    </location>
</feature>
<feature type="chain" id="PRO_0000209337" description="Equilibrative nucleoside transporter 1">
    <location>
        <begin position="2"/>
        <end position="456"/>
    </location>
</feature>
<feature type="topological domain" description="Cytoplasmic" evidence="7">
    <location>
        <begin position="2"/>
        <end position="12"/>
    </location>
</feature>
<feature type="transmembrane region" description="Helical" evidence="2">
    <location>
        <begin position="13"/>
        <end position="29"/>
    </location>
</feature>
<feature type="topological domain" description="Extracellular" evidence="7">
    <location>
        <begin position="30"/>
        <end position="82"/>
    </location>
</feature>
<feature type="transmembrane region" description="Helical" evidence="2">
    <location>
        <begin position="83"/>
        <end position="107"/>
    </location>
</feature>
<feature type="topological domain" description="Cytoplasmic" evidence="7">
    <location>
        <begin position="108"/>
        <end position="111"/>
    </location>
</feature>
<feature type="transmembrane region" description="Helical" evidence="2">
    <location>
        <begin position="112"/>
        <end position="130"/>
    </location>
</feature>
<feature type="topological domain" description="Extracellular" evidence="7">
    <location>
        <begin position="131"/>
        <end position="138"/>
    </location>
</feature>
<feature type="transmembrane region" description="Helical" evidence="2">
    <location>
        <begin position="139"/>
        <end position="157"/>
    </location>
</feature>
<feature type="topological domain" description="Cytoplasmic" evidence="2">
    <location>
        <begin position="158"/>
        <end position="174"/>
    </location>
</feature>
<feature type="transmembrane region" description="Helical" evidence="2">
    <location>
        <begin position="175"/>
        <end position="199"/>
    </location>
</feature>
<feature type="topological domain" description="Extracellular" evidence="7">
    <location>
        <begin position="200"/>
        <end position="206"/>
    </location>
</feature>
<feature type="transmembrane region" description="Helical" evidence="2">
    <location>
        <begin position="207"/>
        <end position="227"/>
    </location>
</feature>
<feature type="topological domain" description="Cytoplasmic" evidence="7">
    <location>
        <begin position="228"/>
        <end position="291"/>
    </location>
</feature>
<feature type="transmembrane region" description="Helical" evidence="2">
    <location>
        <begin position="292"/>
        <end position="311"/>
    </location>
</feature>
<feature type="topological domain" description="Extracellular" evidence="7">
    <location>
        <begin position="312"/>
        <end position="323"/>
    </location>
</feature>
<feature type="transmembrane region" description="Helical" evidence="2">
    <location>
        <begin position="324"/>
        <end position="342"/>
    </location>
</feature>
<feature type="topological domain" description="Cytoplasmic" evidence="2">
    <location>
        <begin position="343"/>
        <end position="359"/>
    </location>
</feature>
<feature type="transmembrane region" description="Helical" evidence="2">
    <location>
        <begin position="360"/>
        <end position="378"/>
    </location>
</feature>
<feature type="topological domain" description="Extracellular" evidence="7">
    <location>
        <begin position="379"/>
        <end position="393"/>
    </location>
</feature>
<feature type="transmembrane region" description="Helical" evidence="2">
    <location>
        <begin position="394"/>
        <end position="413"/>
    </location>
</feature>
<feature type="topological domain" description="Cytoplasmic" evidence="2">
    <location>
        <begin position="414"/>
        <end position="431"/>
    </location>
</feature>
<feature type="transmembrane region" description="Helical" evidence="2">
    <location>
        <begin position="432"/>
        <end position="452"/>
    </location>
</feature>
<feature type="topological domain" description="Extracellular" evidence="7">
    <location>
        <begin position="453"/>
        <end position="456"/>
    </location>
</feature>
<feature type="region of interest" description="Disordered" evidence="3">
    <location>
        <begin position="254"/>
        <end position="276"/>
    </location>
</feature>
<feature type="compositionally biased region" description="Basic and acidic residues" evidence="3">
    <location>
        <begin position="254"/>
        <end position="266"/>
    </location>
</feature>
<feature type="site" description="Not glycosylated" evidence="7">
    <location>
        <position position="277"/>
    </location>
</feature>
<feature type="site" description="Not glycosylated" evidence="7">
    <location>
        <position position="288"/>
    </location>
</feature>
<feature type="site" description="Essential for nucleobase transport" evidence="15">
    <location>
        <position position="414"/>
    </location>
</feature>
<feature type="modified residue" description="Phosphoserine" evidence="27">
    <location>
        <position position="254"/>
    </location>
</feature>
<feature type="modified residue" description="Phosphoserine" evidence="27">
    <location>
        <position position="269"/>
    </location>
</feature>
<feature type="modified residue" description="Phosphoserine" evidence="27">
    <location>
        <position position="273"/>
    </location>
</feature>
<feature type="glycosylation site" description="N-linked (GlcNAc...) asparagine" evidence="7 14">
    <location>
        <position position="48"/>
    </location>
</feature>
<feature type="splice variant" id="VSP_056579" description="In isoform 2." evidence="23">
    <original>M</original>
    <variation>MRRERTRGPQAWEFPSPTKSGCSLQSLSRDLRELREGEKPEDQAETEESWQGLARKTPGKACAPEGGSCQPGKTENTITM</variation>
    <location>
        <position position="1"/>
    </location>
</feature>
<feature type="sequence variant" id="VAR_053668" description="Decreased inosine transport; dbSNP:rs45573936." evidence="20">
    <original>I</original>
    <variation>T</variation>
    <location>
        <position position="216"/>
    </location>
</feature>
<feature type="sequence variant" id="VAR_036221" description="In a colorectal cancer sample; somatic mutation." evidence="12">
    <original>A</original>
    <variation>T</variation>
    <location>
        <position position="293"/>
    </location>
</feature>
<feature type="sequence variant" id="VAR_053669" description="In dbSNP:rs45458701.">
    <original>E</original>
    <variation>K</variation>
    <location>
        <position position="391"/>
    </location>
</feature>
<feature type="sequence variant" id="VAR_036222" description="In a colorectal cancer sample; somatic mutation; dbSNP:rs767108156." evidence="12">
    <original>I</original>
    <variation>V</variation>
    <location>
        <position position="455"/>
    </location>
</feature>
<feature type="mutagenesis site" description="No effect on the transport activity for adenosine." evidence="19">
    <original>M</original>
    <variation>I</variation>
    <location>
        <position position="33"/>
    </location>
</feature>
<feature type="mutagenesis site" description="Glycosylation-defective." evidence="7">
    <original>N</original>
    <variation>Q</variation>
    <location>
        <position position="48"/>
    </location>
</feature>
<feature type="mutagenesis site" description="Loss of nucleobase transport; when associated with S-193; S-213; S-222; S-297; S-333; S-378; S-414; S-416 and S-439. No change in nucleobase transport; when associated with S-193; S-213; S-222; S-297; S-333; S-378; S-416 and S-439." evidence="15">
    <original>C</original>
    <variation>S</variation>
    <location>
        <position position="87"/>
    </location>
</feature>
<feature type="mutagenesis site" description="Resistance to nitrobenzylmercaptopurine riboside (NBMPR) and dilazep but not dipyridamole." evidence="9">
    <original>L</original>
    <variation>P</variation>
    <location>
        <position position="92"/>
    </location>
</feature>
<feature type="mutagenesis site" description="Increase in the transport capacity and decrease in affinity for inosine. Increase in the transport capacity but no change in affinity for adenosine. Resistance to nitrobenzylmercaptopurine riboside (NBMPR) and dilazep but not dipyridamole." evidence="9">
    <original>L</original>
    <variation>Q</variation>
    <location>
        <position position="92"/>
    </location>
</feature>
<feature type="mutagenesis site" description="Decreased affinity for cytidine and adenosine but not uridine. Resistance to azidothymidine (AZT), dideoxyinosine (ddI), nitrobenzylmercaptopurine riboside (NBMPR), dilazep, dipyridamole and hypoxanthine but not dideoxycytidine (ddC)." evidence="10">
    <original>G</original>
    <variation>S</variation>
    <location>
        <position position="154"/>
    </location>
</feature>
<feature type="mutagenesis site" description="Reduction of the transport activity for adenosine." evidence="19">
    <original>G</original>
    <variation>L</variation>
    <location>
        <position position="179"/>
    </location>
</feature>
<feature type="mutagenesis site" description="Loss of nucleobase transport; when associated with S-87; S-213; S-222; S-297; S-333; S-378; S-414; S-416 and S-439. No change in nucleobase transport; when associated with S-87; S-213; S-222; S-297; S-333; S-378; S-416 and S-439." evidence="15">
    <original>C</original>
    <variation>S</variation>
    <location>
        <position position="193"/>
    </location>
</feature>
<feature type="mutagenesis site" description="Reduction of the transport activity for adenosine." evidence="19">
    <original>F</original>
    <variation>A</variation>
    <location>
        <position position="209"/>
    </location>
</feature>
<feature type="mutagenesis site" description="Loss of nucleobase transport; when associated with S-87; S-193; S-222; S-297; S-333; S-378; S-414; S-416 and S-439. No change in nucleobase transport; when associated with S-87; S-193; S-222; S-297; S-333; S-378; S-416 and S-439." evidence="15">
    <original>C</original>
    <variation>S</variation>
    <location>
        <position position="213"/>
    </location>
</feature>
<feature type="mutagenesis site" description="Loss of nucleobase transport; when associated with S-87; S-193; S-213; S-297; S-333; S-378; S-414; S-416 and S-439. No change in nucleobase transport; when associated with S-87; S-193; S-213; S-297; S-333; S-378; S-416 and S-439." evidence="15">
    <original>C</original>
    <variation>S</variation>
    <location>
        <position position="222"/>
    </location>
</feature>
<feature type="mutagenesis site" description="No effect on glycosylation." evidence="7">
    <original>N</original>
    <variation>Q</variation>
    <location>
        <position position="277"/>
    </location>
</feature>
<feature type="mutagenesis site" description="No effect on glycosylation." evidence="7">
    <original>N</original>
    <variation>Q</variation>
    <location>
        <position position="288"/>
    </location>
</feature>
<feature type="mutagenesis site" description="Loss of nucleobase transport; when associated with S-87; S-193; S-213; S-222; S-333; S-378; S-414; S-416 and S-439. No change in nucleobase transport; when associated with S-87; S-193; S-213; S-222; S-333; S-378; S-416 and S-439." evidence="15">
    <original>C</original>
    <variation>S</variation>
    <location>
        <position position="297"/>
    </location>
</feature>
<feature type="mutagenesis site" description="Reduction of the transport activity for adenosine." evidence="19">
    <original>P</original>
    <variation>A</variation>
    <location>
        <position position="308"/>
    </location>
</feature>
<feature type="mutagenesis site" description="Loss of nucleobase transport; when associated with S-87; S-193; S-213; S-222; S-297; S-378; S-414; S-416 and S-439. No change in nucleobase transport; when associated with S-87; S-193; S-213; S-222; S-297; S-378; S-416 and S-439." evidence="15">
    <original>C</original>
    <variation>S</variation>
    <location>
        <position position="333"/>
    </location>
</feature>
<feature type="mutagenesis site" description="Decrease in the transport capacity but no change in affinity for adenosine. Resistance to dipyridamole and dilazep, little or no effect on the sensitivities to nitrobenzylmercaptopurine riboside (NBMPR), draflazine and soluflazine." evidence="13">
    <original>F</original>
    <variation>C</variation>
    <variation>I</variation>
    <variation>V</variation>
    <variation>S</variation>
    <location>
        <position position="334"/>
    </location>
</feature>
<feature type="mutagenesis site" description="Increase in the transport capacity but no change in affinity for adenosine. Resistance to dipyridamole and increase in the sensitivity to dilazep. Little or no effect on the sensitivities to nitrobenzylmercaptopurine riboside (NBMPR), draflazine and soluflazine." evidence="13">
    <original>F</original>
    <variation>Y</variation>
    <location>
        <position position="334"/>
    </location>
</feature>
<feature type="mutagenesis site" description="No change in the transport capacity but decrease in affinity for adenosine. Resistance to dipyridamole, dilazep, nitrobenzylmercaptopurine riboside (NBMPR), draflazine and soluflazine." evidence="13">
    <original>N</original>
    <variation>A</variation>
    <location>
        <position position="338"/>
    </location>
</feature>
<feature type="mutagenesis site" description="Impaired protein folding and/or altered trafficking. Decrease in the transport capacity but no change in affinity for adenosine. No effect on the sensitivity to dipyridamole. Resistance to dilazep, nitrobenzylmercaptopurine riboside (NBMPR), draflazine and soluflazine." evidence="13">
    <original>N</original>
    <variation>C</variation>
    <location>
        <position position="338"/>
    </location>
</feature>
<feature type="mutagenesis site" description="Decrease in the transport capacity for adenosine but no change in substrate affinity. Resistance to dipyridamole, dilazep, nitrobenzylmercaptopurine riboside (NBMPR), draflazine and soluflazine." evidence="13">
    <original>N</original>
    <variation>M</variation>
    <variation>D</variation>
    <location>
        <position position="338"/>
    </location>
</feature>
<feature type="mutagenesis site" description="Impaired protein folding and/or altered trafficking. Decrease in the transport capacity for adenosine but no change in substrate affinity. Resistance to dipyridamole, dilazep, nitrobenzylmercaptopurine riboside (NBMPR), draflazine and soluflazine." evidence="13">
    <original>N</original>
    <variation>Q</variation>
    <location>
        <position position="338"/>
    </location>
</feature>
<feature type="mutagenesis site" description="Decrease in the transport capacity and substrate affinity for adenosine. Resistance to dipyridamole, dilazep, nitrobenzylmercaptopurine riboside (NBMPR), draflazine and soluflazine." evidence="13">
    <original>N</original>
    <variation>S</variation>
    <location>
        <position position="338"/>
    </location>
</feature>
<feature type="mutagenesis site" description="Loss of nucleobase transport; when associated with S-87; S-193; S-213; S-222; S-297; S-333; S-414; S-416 and S-439. No change in nucleobase transport; when associated with S-87; S-193; S-213; S-222; S-297; S-333; S-416 and S-439." evidence="15">
    <original>C</original>
    <variation>S</variation>
    <location>
        <position position="378"/>
    </location>
</feature>
<feature type="mutagenesis site" description="No effect on the transport activity for adenosine." evidence="19">
    <original>F</original>
    <variation>A</variation>
    <location>
        <position position="390"/>
    </location>
</feature>
<feature type="mutagenesis site" description="Loss of nucleobase transport; when associated with S-87; S-193; S-213; S-222; S-297; S-333; S-378; S-416 and S-439." evidence="15">
    <original>C</original>
    <variation>S</variation>
    <location>
        <position position="414"/>
    </location>
</feature>
<feature type="mutagenesis site" description="Loss of nucleobase transport; when associated with S-87; S-193; S-213; S-222; S-297; S-333; S-378; S-414 and S-439. No change in nucleobase transport; when associated with S-87; S-193; S-213; S-222; S-297; S-333; S-378 and S-439." evidence="15">
    <original>C</original>
    <variation>S</variation>
    <location>
        <position position="416"/>
    </location>
</feature>
<feature type="mutagenesis site" description="Loss of nucleobase transport; when associated with S-87; S-193; S-213; S-222; S-297; S-333; S-378; S-414 and S-416. No change in nucleobase transport; when associated with S-87; S-193; S-213; S-222; S-297; S-333; S-378 and S-416." evidence="15">
    <original>C</original>
    <variation>S</variation>
    <location>
        <position position="439"/>
    </location>
</feature>
<feature type="mutagenesis site" description="Reduction of the transport activity for adenosine." evidence="19">
    <original>L</original>
    <variation>I</variation>
    <location>
        <position position="442"/>
    </location>
</feature>
<feature type="mutagenesis site" description="No effect on subcellular localization and inosine transport." evidence="8">
    <location>
        <begin position="453"/>
        <end position="456"/>
    </location>
</feature>
<feature type="mutagenesis site" description="No effect on subcellular localization and inosine transport." evidence="8">
    <original>R</original>
    <variation>A</variation>
    <location>
        <position position="453"/>
    </location>
</feature>
<feature type="helix" evidence="29">
    <location>
        <begin position="10"/>
        <end position="12"/>
    </location>
</feature>
<feature type="helix" evidence="29">
    <location>
        <begin position="13"/>
        <end position="34"/>
    </location>
</feature>
<feature type="helix" evidence="29">
    <location>
        <begin position="36"/>
        <end position="44"/>
    </location>
</feature>
<feature type="helix" evidence="29">
    <location>
        <begin position="77"/>
        <end position="102"/>
    </location>
</feature>
<feature type="helix" evidence="29">
    <location>
        <begin position="103"/>
        <end position="105"/>
    </location>
</feature>
<feature type="helix" evidence="29">
    <location>
        <begin position="108"/>
        <end position="131"/>
    </location>
</feature>
<feature type="helix" evidence="29">
    <location>
        <begin position="136"/>
        <end position="165"/>
    </location>
</feature>
<feature type="helix" evidence="29">
    <location>
        <begin position="170"/>
        <end position="197"/>
    </location>
</feature>
<feature type="helix" evidence="29">
    <location>
        <begin position="201"/>
        <end position="224"/>
    </location>
</feature>
<feature type="helix" evidence="29">
    <location>
        <begin position="230"/>
        <end position="236"/>
    </location>
</feature>
<feature type="helix" evidence="29">
    <location>
        <begin position="237"/>
        <end position="239"/>
    </location>
</feature>
<feature type="helix" evidence="29">
    <location>
        <begin position="282"/>
        <end position="306"/>
    </location>
</feature>
<feature type="turn" evidence="29">
    <location>
        <begin position="307"/>
        <end position="310"/>
    </location>
</feature>
<feature type="helix" evidence="29">
    <location>
        <begin position="311"/>
        <end position="313"/>
    </location>
</feature>
<feature type="helix" evidence="29">
    <location>
        <begin position="322"/>
        <end position="324"/>
    </location>
</feature>
<feature type="helix" evidence="29">
    <location>
        <begin position="325"/>
        <end position="332"/>
    </location>
</feature>
<feature type="helix" evidence="29">
    <location>
        <begin position="334"/>
        <end position="347"/>
    </location>
</feature>
<feature type="turn" evidence="29">
    <location>
        <begin position="348"/>
        <end position="350"/>
    </location>
</feature>
<feature type="helix" evidence="29">
    <location>
        <begin position="360"/>
        <end position="367"/>
    </location>
</feature>
<feature type="helix" evidence="29">
    <location>
        <begin position="368"/>
        <end position="370"/>
    </location>
</feature>
<feature type="helix" evidence="29">
    <location>
        <begin position="371"/>
        <end position="376"/>
    </location>
</feature>
<feature type="strand" evidence="29">
    <location>
        <begin position="380"/>
        <end position="382"/>
    </location>
</feature>
<feature type="strand" evidence="28">
    <location>
        <begin position="384"/>
        <end position="386"/>
    </location>
</feature>
<feature type="helix" evidence="29">
    <location>
        <begin position="393"/>
        <end position="417"/>
    </location>
</feature>
<feature type="helix" evidence="29">
    <location>
        <begin position="418"/>
        <end position="421"/>
    </location>
</feature>
<feature type="helix" evidence="29">
    <location>
        <begin position="424"/>
        <end position="449"/>
    </location>
</feature>
<sequence>MTTSHQPQDRYKAVWLIFFMLGLGTLLPWNFFMTATQYFTNRLDMSQNVSLVTAELSKDAQASAAPAAPLPERNSLSAIFNNVMTLCAMLPLLLFTYLNSFLHQRIPQSVRILGSLVAILLVFLITAILVKVQLDALPFFVITMIKIVLINSFGAILQGSLFGLAGLLPASYTAPIMSGQGLAGFFASVAMICAIASGSELSESAFGYFITACAVIILTIICYLGLPRLEFYRYYQQLKLEGPGEQETKLDLISKGEEPRAGKEESGVSVSNSQPTNESHSIKAILKNISVLAFSVCFIFTITIGMFPAVTVEVKSSIAGSSTWERYFIPVSCFLTFNIFDWLGRSLTAVFMWPGKDSRWLPSLVLARLVFVPLLLLCNIKPRRYLTVVFEHDAWFIFFMAAFAFSNGYLASLCMCFGPKKVKPAEAETAGAIMAFFLCLGLALGAVFSFLFRAIV</sequence>
<organism>
    <name type="scientific">Homo sapiens</name>
    <name type="common">Human</name>
    <dbReference type="NCBI Taxonomy" id="9606"/>
    <lineage>
        <taxon>Eukaryota</taxon>
        <taxon>Metazoa</taxon>
        <taxon>Chordata</taxon>
        <taxon>Craniata</taxon>
        <taxon>Vertebrata</taxon>
        <taxon>Euteleostomi</taxon>
        <taxon>Mammalia</taxon>
        <taxon>Eutheria</taxon>
        <taxon>Euarchontoglires</taxon>
        <taxon>Primates</taxon>
        <taxon>Haplorrhini</taxon>
        <taxon>Catarrhini</taxon>
        <taxon>Hominidae</taxon>
        <taxon>Homo</taxon>
    </lineage>
</organism>